<name>HP252_BOVIN</name>
<protein>
    <recommendedName>
        <fullName>Protein HP-25 homolog 2</fullName>
    </recommendedName>
</protein>
<keyword id="KW-0176">Collagen</keyword>
<keyword id="KW-1185">Reference proteome</keyword>
<keyword id="KW-0964">Secreted</keyword>
<keyword id="KW-0732">Signal</keyword>
<comment type="subcellular location">
    <subcellularLocation>
        <location evidence="1">Secreted</location>
    </subcellularLocation>
</comment>
<reference key="1">
    <citation type="submission" date="2009-01" db="EMBL/GenBank/DDBJ databases">
        <title>Identification and characterization of three novel C1q/TNF family members that are orthologs of the siberian chipmunk hibernating proteins HP-20, HP-25, and HP-27.</title>
        <authorList>
            <person name="Wong G.W."/>
        </authorList>
    </citation>
    <scope>NUCLEOTIDE SEQUENCE [MRNA]</scope>
    <source>
        <tissue>Liver</tissue>
    </source>
</reference>
<reference key="2">
    <citation type="submission" date="2006-01" db="EMBL/GenBank/DDBJ databases">
        <authorList>
            <consortium name="NIH - Mammalian Gene Collection (MGC) project"/>
        </authorList>
    </citation>
    <scope>NUCLEOTIDE SEQUENCE [LARGE SCALE MRNA]</scope>
    <source>
        <strain>Hereford</strain>
        <tissue>Testis</tissue>
    </source>
</reference>
<feature type="signal peptide" evidence="2">
    <location>
        <begin position="1"/>
        <end position="30"/>
    </location>
</feature>
<feature type="chain" id="PRO_0000399906" description="Protein HP-25 homolog 2">
    <location>
        <begin position="31"/>
        <end position="215"/>
    </location>
</feature>
<feature type="domain" description="Collagen-like">
    <location>
        <begin position="43"/>
        <end position="76"/>
    </location>
</feature>
<feature type="domain" description="C1q" evidence="3">
    <location>
        <begin position="82"/>
        <end position="215"/>
    </location>
</feature>
<feature type="region of interest" description="Disordered" evidence="4">
    <location>
        <begin position="35"/>
        <end position="79"/>
    </location>
</feature>
<feature type="compositionally biased region" description="Pro residues" evidence="4">
    <location>
        <begin position="45"/>
        <end position="68"/>
    </location>
</feature>
<sequence>MPGRGGQSLSMVCVDVWILALSVLSVMADATSVPVTESCDSQGPPGLPGPPGLPGPPGPPGPPGPPGLRGPTGIPGDIESCLSPPKSAFAVKMNDPLPAPSQPIVFKEALHNDQDHFNLTTGVFTCTIPGVYRFGFDIELFQHAVKLGLMKNDTQILEKESKAKDNYRHLSGNVVLQLTLGDRVWLESKLDTTETEKGPIQSMFFGYLLYGNYPG</sequence>
<organism>
    <name type="scientific">Bos taurus</name>
    <name type="common">Bovine</name>
    <dbReference type="NCBI Taxonomy" id="9913"/>
    <lineage>
        <taxon>Eukaryota</taxon>
        <taxon>Metazoa</taxon>
        <taxon>Chordata</taxon>
        <taxon>Craniata</taxon>
        <taxon>Vertebrata</taxon>
        <taxon>Euteleostomi</taxon>
        <taxon>Mammalia</taxon>
        <taxon>Eutheria</taxon>
        <taxon>Laurasiatheria</taxon>
        <taxon>Artiodactyla</taxon>
        <taxon>Ruminantia</taxon>
        <taxon>Pecora</taxon>
        <taxon>Bovidae</taxon>
        <taxon>Bovinae</taxon>
        <taxon>Bos</taxon>
    </lineage>
</organism>
<dbReference type="EMBL" id="FJ645736">
    <property type="protein sequence ID" value="ACV32360.1"/>
    <property type="molecule type" value="mRNA"/>
</dbReference>
<dbReference type="EMBL" id="BC112508">
    <property type="protein sequence ID" value="AAI12509.1"/>
    <property type="molecule type" value="mRNA"/>
</dbReference>
<dbReference type="RefSeq" id="NP_001039544.1">
    <property type="nucleotide sequence ID" value="NM_001046079.1"/>
</dbReference>
<dbReference type="SMR" id="Q2KIU3"/>
<dbReference type="FunCoup" id="Q2KIU3">
    <property type="interactions" value="2"/>
</dbReference>
<dbReference type="STRING" id="9913.ENSBTAP00000024695"/>
<dbReference type="PaxDb" id="9913-ENSBTAP00000024695"/>
<dbReference type="PeptideAtlas" id="Q2KIU3"/>
<dbReference type="GeneID" id="511239"/>
<dbReference type="KEGG" id="bta:511239"/>
<dbReference type="VEuPathDB" id="HostDB:ENSBTAG00000018556"/>
<dbReference type="eggNOG" id="ENOG502SK5K">
    <property type="taxonomic scope" value="Eukaryota"/>
</dbReference>
<dbReference type="HOGENOM" id="CLU_001074_0_2_1"/>
<dbReference type="InParanoid" id="Q2KIU3"/>
<dbReference type="OMA" id="FGYNLEA"/>
<dbReference type="OrthoDB" id="8044756at2759"/>
<dbReference type="TreeFam" id="TF329591"/>
<dbReference type="Proteomes" id="UP000009136">
    <property type="component" value="Chromosome 5"/>
</dbReference>
<dbReference type="Bgee" id="ENSBTAG00000018556">
    <property type="expression patterns" value="Expressed in liver and 24 other cell types or tissues"/>
</dbReference>
<dbReference type="GO" id="GO:0005581">
    <property type="term" value="C:collagen trimer"/>
    <property type="evidence" value="ECO:0007669"/>
    <property type="project" value="UniProtKB-KW"/>
</dbReference>
<dbReference type="GO" id="GO:0005576">
    <property type="term" value="C:extracellular region"/>
    <property type="evidence" value="ECO:0007669"/>
    <property type="project" value="UniProtKB-SubCell"/>
</dbReference>
<dbReference type="Gene3D" id="2.60.120.40">
    <property type="match status" value="1"/>
</dbReference>
<dbReference type="InterPro" id="IPR001073">
    <property type="entry name" value="C1q_dom"/>
</dbReference>
<dbReference type="InterPro" id="IPR050392">
    <property type="entry name" value="Collagen/C1q_domain"/>
</dbReference>
<dbReference type="InterPro" id="IPR008983">
    <property type="entry name" value="Tumour_necrosis_fac-like_dom"/>
</dbReference>
<dbReference type="PANTHER" id="PTHR15427">
    <property type="entry name" value="EMILIN ELASTIN MICROFIBRIL INTERFACE-LOCATED PROTEIN ELASTIN MICROFIBRIL INTERFACER"/>
    <property type="match status" value="1"/>
</dbReference>
<dbReference type="PANTHER" id="PTHR15427:SF34">
    <property type="entry name" value="PROTEIN HP-25 HOMOLOG 2"/>
    <property type="match status" value="1"/>
</dbReference>
<dbReference type="Pfam" id="PF00386">
    <property type="entry name" value="C1q"/>
    <property type="match status" value="1"/>
</dbReference>
<dbReference type="PRINTS" id="PR00007">
    <property type="entry name" value="COMPLEMNTC1Q"/>
</dbReference>
<dbReference type="SMART" id="SM00110">
    <property type="entry name" value="C1Q"/>
    <property type="match status" value="1"/>
</dbReference>
<dbReference type="SUPFAM" id="SSF49842">
    <property type="entry name" value="TNF-like"/>
    <property type="match status" value="1"/>
</dbReference>
<dbReference type="PROSITE" id="PS50871">
    <property type="entry name" value="C1Q"/>
    <property type="match status" value="1"/>
</dbReference>
<evidence type="ECO:0000250" key="1"/>
<evidence type="ECO:0000255" key="2"/>
<evidence type="ECO:0000255" key="3">
    <source>
        <dbReference type="PROSITE-ProRule" id="PRU00368"/>
    </source>
</evidence>
<evidence type="ECO:0000256" key="4">
    <source>
        <dbReference type="SAM" id="MobiDB-lite"/>
    </source>
</evidence>
<accession>Q2KIU3</accession>
<proteinExistence type="evidence at transcript level"/>